<reference key="1">
    <citation type="submission" date="2008-10" db="EMBL/GenBank/DDBJ databases">
        <title>Genome sequence of Clostridium botulinum A2 Kyoto.</title>
        <authorList>
            <person name="Shrivastava S."/>
            <person name="Brinkac L.M."/>
            <person name="Brown J.L."/>
            <person name="Bruce D."/>
            <person name="Detter C.C."/>
            <person name="Johnson E.A."/>
            <person name="Munk C.A."/>
            <person name="Smith L.A."/>
            <person name="Smith T.J."/>
            <person name="Sutton G."/>
            <person name="Brettin T.S."/>
        </authorList>
    </citation>
    <scope>NUCLEOTIDE SEQUENCE [LARGE SCALE GENOMIC DNA]</scope>
    <source>
        <strain>Kyoto / Type A2</strain>
    </source>
</reference>
<accession>C1FTB8</accession>
<organism>
    <name type="scientific">Clostridium botulinum (strain Kyoto / Type A2)</name>
    <dbReference type="NCBI Taxonomy" id="536232"/>
    <lineage>
        <taxon>Bacteria</taxon>
        <taxon>Bacillati</taxon>
        <taxon>Bacillota</taxon>
        <taxon>Clostridia</taxon>
        <taxon>Eubacteriales</taxon>
        <taxon>Clostridiaceae</taxon>
        <taxon>Clostridium</taxon>
    </lineage>
</organism>
<protein>
    <recommendedName>
        <fullName evidence="1">Putative pre-16S rRNA nuclease</fullName>
        <ecNumber evidence="1">3.1.-.-</ecNumber>
    </recommendedName>
</protein>
<sequence length="137" mass="15361">MRILGLDIGDRTIGIAISDPLGFTAQGITTIRRKSEAYDLEEIKKICDKYEVDTIVSGLPKNMNGTLGPQSEKVLEFCDLIKEHLNIEIKMWDERLTTVAATRAMLEADLSRSKRKKIVDKVAATYILQGYLDSLSK</sequence>
<gene>
    <name type="ordered locus">CLM_2869</name>
</gene>
<name>YQGF_CLOBJ</name>
<proteinExistence type="inferred from homology"/>
<keyword id="KW-0963">Cytoplasm</keyword>
<keyword id="KW-0378">Hydrolase</keyword>
<keyword id="KW-0540">Nuclease</keyword>
<keyword id="KW-0690">Ribosome biogenesis</keyword>
<dbReference type="EC" id="3.1.-.-" evidence="1"/>
<dbReference type="EMBL" id="CP001581">
    <property type="protein sequence ID" value="ACO84017.1"/>
    <property type="molecule type" value="Genomic_DNA"/>
</dbReference>
<dbReference type="SMR" id="C1FTB8"/>
<dbReference type="KEGG" id="cby:CLM_2869"/>
<dbReference type="eggNOG" id="COG0816">
    <property type="taxonomic scope" value="Bacteria"/>
</dbReference>
<dbReference type="HOGENOM" id="CLU_098240_2_0_9"/>
<dbReference type="Proteomes" id="UP000001374">
    <property type="component" value="Chromosome"/>
</dbReference>
<dbReference type="GO" id="GO:0005829">
    <property type="term" value="C:cytosol"/>
    <property type="evidence" value="ECO:0007669"/>
    <property type="project" value="TreeGrafter"/>
</dbReference>
<dbReference type="GO" id="GO:0004518">
    <property type="term" value="F:nuclease activity"/>
    <property type="evidence" value="ECO:0007669"/>
    <property type="project" value="UniProtKB-KW"/>
</dbReference>
<dbReference type="GO" id="GO:0000967">
    <property type="term" value="P:rRNA 5'-end processing"/>
    <property type="evidence" value="ECO:0007669"/>
    <property type="project" value="UniProtKB-UniRule"/>
</dbReference>
<dbReference type="CDD" id="cd16964">
    <property type="entry name" value="YqgF"/>
    <property type="match status" value="1"/>
</dbReference>
<dbReference type="FunFam" id="3.30.420.140:FF:000003">
    <property type="entry name" value="Putative pre-16S rRNA nuclease"/>
    <property type="match status" value="1"/>
</dbReference>
<dbReference type="Gene3D" id="3.30.420.140">
    <property type="entry name" value="YqgF/RNase H-like domain"/>
    <property type="match status" value="1"/>
</dbReference>
<dbReference type="HAMAP" id="MF_00651">
    <property type="entry name" value="Nuclease_YqgF"/>
    <property type="match status" value="1"/>
</dbReference>
<dbReference type="InterPro" id="IPR012337">
    <property type="entry name" value="RNaseH-like_sf"/>
</dbReference>
<dbReference type="InterPro" id="IPR005227">
    <property type="entry name" value="YqgF"/>
</dbReference>
<dbReference type="InterPro" id="IPR006641">
    <property type="entry name" value="YqgF/RNaseH-like_dom"/>
</dbReference>
<dbReference type="InterPro" id="IPR037027">
    <property type="entry name" value="YqgF/RNaseH-like_dom_sf"/>
</dbReference>
<dbReference type="NCBIfam" id="TIGR00250">
    <property type="entry name" value="RNAse_H_YqgF"/>
    <property type="match status" value="1"/>
</dbReference>
<dbReference type="PANTHER" id="PTHR33317">
    <property type="entry name" value="POLYNUCLEOTIDYL TRANSFERASE, RIBONUCLEASE H-LIKE SUPERFAMILY PROTEIN"/>
    <property type="match status" value="1"/>
</dbReference>
<dbReference type="PANTHER" id="PTHR33317:SF4">
    <property type="entry name" value="POLYNUCLEOTIDYL TRANSFERASE, RIBONUCLEASE H-LIKE SUPERFAMILY PROTEIN"/>
    <property type="match status" value="1"/>
</dbReference>
<dbReference type="Pfam" id="PF03652">
    <property type="entry name" value="RuvX"/>
    <property type="match status" value="1"/>
</dbReference>
<dbReference type="SMART" id="SM00732">
    <property type="entry name" value="YqgFc"/>
    <property type="match status" value="1"/>
</dbReference>
<dbReference type="SUPFAM" id="SSF53098">
    <property type="entry name" value="Ribonuclease H-like"/>
    <property type="match status" value="1"/>
</dbReference>
<evidence type="ECO:0000255" key="1">
    <source>
        <dbReference type="HAMAP-Rule" id="MF_00651"/>
    </source>
</evidence>
<comment type="function">
    <text evidence="1">Could be a nuclease involved in processing of the 5'-end of pre-16S rRNA.</text>
</comment>
<comment type="subcellular location">
    <subcellularLocation>
        <location evidence="1">Cytoplasm</location>
    </subcellularLocation>
</comment>
<comment type="similarity">
    <text evidence="1">Belongs to the YqgF nuclease family.</text>
</comment>
<feature type="chain" id="PRO_1000147472" description="Putative pre-16S rRNA nuclease">
    <location>
        <begin position="1"/>
        <end position="137"/>
    </location>
</feature>